<evidence type="ECO:0000255" key="1">
    <source>
        <dbReference type="HAMAP-Rule" id="MF_00057"/>
    </source>
</evidence>
<reference key="1">
    <citation type="submission" date="2008-08" db="EMBL/GenBank/DDBJ databases">
        <title>The complete genome sequence of Thermodesulfovibrio yellowstonii strain ATCC 51303 / DSM 11347 / YP87.</title>
        <authorList>
            <person name="Dodson R.J."/>
            <person name="Durkin A.S."/>
            <person name="Wu M."/>
            <person name="Eisen J."/>
            <person name="Sutton G."/>
        </authorList>
    </citation>
    <scope>NUCLEOTIDE SEQUENCE [LARGE SCALE GENOMIC DNA]</scope>
    <source>
        <strain>ATCC 51303 / DSM 11347 / YP87</strain>
    </source>
</reference>
<name>KDSB_THEYD</name>
<comment type="function">
    <text evidence="1">Activates KDO (a required 8-carbon sugar) for incorporation into bacterial lipopolysaccharide in Gram-negative bacteria.</text>
</comment>
<comment type="catalytic activity">
    <reaction evidence="1">
        <text>3-deoxy-alpha-D-manno-oct-2-ulosonate + CTP = CMP-3-deoxy-beta-D-manno-octulosonate + diphosphate</text>
        <dbReference type="Rhea" id="RHEA:23448"/>
        <dbReference type="ChEBI" id="CHEBI:33019"/>
        <dbReference type="ChEBI" id="CHEBI:37563"/>
        <dbReference type="ChEBI" id="CHEBI:85986"/>
        <dbReference type="ChEBI" id="CHEBI:85987"/>
        <dbReference type="EC" id="2.7.7.38"/>
    </reaction>
</comment>
<comment type="pathway">
    <text evidence="1">Nucleotide-sugar biosynthesis; CMP-3-deoxy-D-manno-octulosonate biosynthesis; CMP-3-deoxy-D-manno-octulosonate from 3-deoxy-D-manno-octulosonate and CTP: step 1/1.</text>
</comment>
<comment type="pathway">
    <text evidence="1">Bacterial outer membrane biogenesis; lipopolysaccharide biosynthesis.</text>
</comment>
<comment type="subcellular location">
    <subcellularLocation>
        <location evidence="1">Cytoplasm</location>
    </subcellularLocation>
</comment>
<comment type="similarity">
    <text evidence="1">Belongs to the KdsB family.</text>
</comment>
<feature type="chain" id="PRO_1000190749" description="3-deoxy-manno-octulosonate cytidylyltransferase">
    <location>
        <begin position="1"/>
        <end position="255"/>
    </location>
</feature>
<keyword id="KW-0963">Cytoplasm</keyword>
<keyword id="KW-0448">Lipopolysaccharide biosynthesis</keyword>
<keyword id="KW-0548">Nucleotidyltransferase</keyword>
<keyword id="KW-1185">Reference proteome</keyword>
<keyword id="KW-0808">Transferase</keyword>
<organism>
    <name type="scientific">Thermodesulfovibrio yellowstonii (strain ATCC 51303 / DSM 11347 / YP87)</name>
    <dbReference type="NCBI Taxonomy" id="289376"/>
    <lineage>
        <taxon>Bacteria</taxon>
        <taxon>Pseudomonadati</taxon>
        <taxon>Nitrospirota</taxon>
        <taxon>Thermodesulfovibrionia</taxon>
        <taxon>Thermodesulfovibrionales</taxon>
        <taxon>Thermodesulfovibrionaceae</taxon>
        <taxon>Thermodesulfovibrio</taxon>
    </lineage>
</organism>
<accession>B5YGT5</accession>
<gene>
    <name evidence="1" type="primary">kdsB</name>
    <name type="ordered locus">THEYE_A0011</name>
</gene>
<sequence>MVTICVIPARYGSTRFPGKPLAFLKNKPIIQHVYERAKSSKMIDEVFVATDDSRILHTVESFGGKAIMTSSKHPSGTDRIAEAVDKLLQEGYNLQESSIVINLQGDEPLIKKEMIDQLIDLMKNENDSIGTLAKRIEKEDDFFNPNIVKVVFDKNGYALYFSRSPIPFDREKFIKGFSKNNFMYKHIGIYGYNVRILKNFVGLPMSRLEEIESLEQLRALENGIKIKVGLTEYDSFGIDTPEDLEVAEKCLNTYS</sequence>
<dbReference type="EC" id="2.7.7.38" evidence="1"/>
<dbReference type="EMBL" id="CP001147">
    <property type="protein sequence ID" value="ACI20451.1"/>
    <property type="molecule type" value="Genomic_DNA"/>
</dbReference>
<dbReference type="RefSeq" id="WP_012545187.1">
    <property type="nucleotide sequence ID" value="NC_011296.1"/>
</dbReference>
<dbReference type="RefSeq" id="YP_002247865.1">
    <property type="nucleotide sequence ID" value="NC_011296.1"/>
</dbReference>
<dbReference type="SMR" id="B5YGT5"/>
<dbReference type="FunCoup" id="B5YGT5">
    <property type="interactions" value="378"/>
</dbReference>
<dbReference type="STRING" id="289376.THEYE_A0011"/>
<dbReference type="EnsemblBacteria" id="ACI20451">
    <property type="protein sequence ID" value="ACI20451"/>
    <property type="gene ID" value="THEYE_A0011"/>
</dbReference>
<dbReference type="KEGG" id="tye:THEYE_A0011"/>
<dbReference type="PATRIC" id="fig|289376.4.peg.11"/>
<dbReference type="eggNOG" id="COG1212">
    <property type="taxonomic scope" value="Bacteria"/>
</dbReference>
<dbReference type="HOGENOM" id="CLU_065038_0_1_0"/>
<dbReference type="InParanoid" id="B5YGT5"/>
<dbReference type="OrthoDB" id="9815559at2"/>
<dbReference type="UniPathway" id="UPA00030"/>
<dbReference type="UniPathway" id="UPA00358">
    <property type="reaction ID" value="UER00476"/>
</dbReference>
<dbReference type="Proteomes" id="UP000000718">
    <property type="component" value="Chromosome"/>
</dbReference>
<dbReference type="GO" id="GO:0005829">
    <property type="term" value="C:cytosol"/>
    <property type="evidence" value="ECO:0000318"/>
    <property type="project" value="GO_Central"/>
</dbReference>
<dbReference type="GO" id="GO:0008690">
    <property type="term" value="F:3-deoxy-manno-octulosonate cytidylyltransferase activity"/>
    <property type="evidence" value="ECO:0000318"/>
    <property type="project" value="GO_Central"/>
</dbReference>
<dbReference type="GO" id="GO:0033468">
    <property type="term" value="P:CMP-keto-3-deoxy-D-manno-octulosonic acid biosynthetic process"/>
    <property type="evidence" value="ECO:0007669"/>
    <property type="project" value="UniProtKB-UniRule"/>
</dbReference>
<dbReference type="GO" id="GO:0009103">
    <property type="term" value="P:lipopolysaccharide biosynthetic process"/>
    <property type="evidence" value="ECO:0007669"/>
    <property type="project" value="UniProtKB-UniRule"/>
</dbReference>
<dbReference type="CDD" id="cd02517">
    <property type="entry name" value="CMP-KDO-Synthetase"/>
    <property type="match status" value="1"/>
</dbReference>
<dbReference type="FunFam" id="3.90.550.10:FF:000011">
    <property type="entry name" value="3-deoxy-manno-octulosonate cytidylyltransferase"/>
    <property type="match status" value="1"/>
</dbReference>
<dbReference type="Gene3D" id="3.90.550.10">
    <property type="entry name" value="Spore Coat Polysaccharide Biosynthesis Protein SpsA, Chain A"/>
    <property type="match status" value="1"/>
</dbReference>
<dbReference type="HAMAP" id="MF_00057">
    <property type="entry name" value="KdsB"/>
    <property type="match status" value="1"/>
</dbReference>
<dbReference type="InterPro" id="IPR003329">
    <property type="entry name" value="Cytidylyl_trans"/>
</dbReference>
<dbReference type="InterPro" id="IPR004528">
    <property type="entry name" value="KdsB"/>
</dbReference>
<dbReference type="InterPro" id="IPR029044">
    <property type="entry name" value="Nucleotide-diphossugar_trans"/>
</dbReference>
<dbReference type="NCBIfam" id="TIGR00466">
    <property type="entry name" value="kdsB"/>
    <property type="match status" value="1"/>
</dbReference>
<dbReference type="NCBIfam" id="NF003950">
    <property type="entry name" value="PRK05450.1-3"/>
    <property type="match status" value="1"/>
</dbReference>
<dbReference type="NCBIfam" id="NF003952">
    <property type="entry name" value="PRK05450.1-5"/>
    <property type="match status" value="1"/>
</dbReference>
<dbReference type="NCBIfam" id="NF009905">
    <property type="entry name" value="PRK13368.1"/>
    <property type="match status" value="1"/>
</dbReference>
<dbReference type="PANTHER" id="PTHR42866">
    <property type="entry name" value="3-DEOXY-MANNO-OCTULOSONATE CYTIDYLYLTRANSFERASE"/>
    <property type="match status" value="1"/>
</dbReference>
<dbReference type="PANTHER" id="PTHR42866:SF2">
    <property type="entry name" value="3-DEOXY-MANNO-OCTULOSONATE CYTIDYLYLTRANSFERASE, MITOCHONDRIAL"/>
    <property type="match status" value="1"/>
</dbReference>
<dbReference type="Pfam" id="PF02348">
    <property type="entry name" value="CTP_transf_3"/>
    <property type="match status" value="1"/>
</dbReference>
<dbReference type="SUPFAM" id="SSF53448">
    <property type="entry name" value="Nucleotide-diphospho-sugar transferases"/>
    <property type="match status" value="1"/>
</dbReference>
<protein>
    <recommendedName>
        <fullName evidence="1">3-deoxy-manno-octulosonate cytidylyltransferase</fullName>
        <ecNumber evidence="1">2.7.7.38</ecNumber>
    </recommendedName>
    <alternativeName>
        <fullName evidence="1">CMP-2-keto-3-deoxyoctulosonic acid synthase</fullName>
        <shortName evidence="1">CKS</shortName>
        <shortName evidence="1">CMP-KDO synthase</shortName>
    </alternativeName>
</protein>
<proteinExistence type="inferred from homology"/>